<dbReference type="EMBL" id="U31783">
    <property type="protein sequence ID" value="AAA79425.1"/>
    <property type="molecule type" value="Genomic_DNA"/>
</dbReference>
<dbReference type="SMR" id="P50771"/>
<dbReference type="Proteomes" id="UP000009158">
    <property type="component" value="Genome"/>
</dbReference>
<dbReference type="GO" id="GO:0042025">
    <property type="term" value="C:host cell nucleus"/>
    <property type="evidence" value="ECO:0007669"/>
    <property type="project" value="UniProtKB-SubCell"/>
</dbReference>
<dbReference type="GO" id="GO:0003677">
    <property type="term" value="F:DNA binding"/>
    <property type="evidence" value="ECO:0007669"/>
    <property type="project" value="UniProtKB-UniRule"/>
</dbReference>
<dbReference type="GO" id="GO:0003700">
    <property type="term" value="F:DNA-binding transcription factor activity"/>
    <property type="evidence" value="ECO:0007669"/>
    <property type="project" value="UniProtKB-UniRule"/>
</dbReference>
<dbReference type="GO" id="GO:0000166">
    <property type="term" value="F:nucleotide binding"/>
    <property type="evidence" value="ECO:0007669"/>
    <property type="project" value="UniProtKB-UniRule"/>
</dbReference>
<dbReference type="GO" id="GO:0006260">
    <property type="term" value="P:DNA replication"/>
    <property type="evidence" value="ECO:0007669"/>
    <property type="project" value="UniProtKB-KW"/>
</dbReference>
<dbReference type="GO" id="GO:0006351">
    <property type="term" value="P:DNA-templated transcription"/>
    <property type="evidence" value="ECO:0007669"/>
    <property type="project" value="UniProtKB-UniRule"/>
</dbReference>
<dbReference type="GO" id="GO:0006275">
    <property type="term" value="P:regulation of DNA replication"/>
    <property type="evidence" value="ECO:0007669"/>
    <property type="project" value="UniProtKB-UniRule"/>
</dbReference>
<dbReference type="GO" id="GO:0039693">
    <property type="term" value="P:viral DNA genome replication"/>
    <property type="evidence" value="ECO:0007669"/>
    <property type="project" value="UniProtKB-UniRule"/>
</dbReference>
<dbReference type="Gene3D" id="3.30.70.330">
    <property type="match status" value="1"/>
</dbReference>
<dbReference type="Gene3D" id="1.10.287.30">
    <property type="entry name" value="E2 (early) protein, N terminal domain, subdomain 1"/>
    <property type="match status" value="1"/>
</dbReference>
<dbReference type="Gene3D" id="2.170.200.10">
    <property type="entry name" value="Papillomavirus E2 early protein domain"/>
    <property type="match status" value="1"/>
</dbReference>
<dbReference type="HAMAP" id="MF_04001">
    <property type="entry name" value="PPV_E2"/>
    <property type="match status" value="1"/>
</dbReference>
<dbReference type="InterPro" id="IPR035975">
    <property type="entry name" value="E2/EBNA1_C_sf"/>
</dbReference>
<dbReference type="InterPro" id="IPR012677">
    <property type="entry name" value="Nucleotide-bd_a/b_plait_sf"/>
</dbReference>
<dbReference type="InterPro" id="IPR000427">
    <property type="entry name" value="Papillomavirus_E2_C"/>
</dbReference>
<dbReference type="InterPro" id="IPR001866">
    <property type="entry name" value="PPV_E2_N"/>
</dbReference>
<dbReference type="InterPro" id="IPR033668">
    <property type="entry name" value="Reg_prot_E2"/>
</dbReference>
<dbReference type="InterPro" id="IPR036050">
    <property type="entry name" value="Regulatory_protein_E2_N"/>
</dbReference>
<dbReference type="InterPro" id="IPR042503">
    <property type="entry name" value="Regulatory_protein_E2_N_1"/>
</dbReference>
<dbReference type="InterPro" id="IPR042504">
    <property type="entry name" value="Regulatory_protein_E2_N_2"/>
</dbReference>
<dbReference type="Pfam" id="PF00511">
    <property type="entry name" value="PPV_E2_C"/>
    <property type="match status" value="1"/>
</dbReference>
<dbReference type="Pfam" id="PF00508">
    <property type="entry name" value="PPV_E2_N"/>
    <property type="match status" value="1"/>
</dbReference>
<dbReference type="SUPFAM" id="SSF51332">
    <property type="entry name" value="E2 regulatory, transactivation domain"/>
    <property type="match status" value="1"/>
</dbReference>
<dbReference type="SUPFAM" id="SSF54957">
    <property type="entry name" value="Viral DNA-binding domain"/>
    <property type="match status" value="1"/>
</dbReference>
<name>VE2_HPV28</name>
<protein>
    <recommendedName>
        <fullName evidence="1">Regulatory protein E2</fullName>
    </recommendedName>
</protein>
<comment type="function">
    <text evidence="1">Plays a role in the initiation of viral DNA replication. A dimer of E2 interacts with a dimer of E1 in order to improve specificity of E1 DNA binding activity. Once the complex recognizes and binds DNA at specific sites, the E2 dimer is removed from DNA. E2 also regulates viral transcription through binding to the E2RE response element (5'-ACCNNNNNNGGT-3') present in multiple copies in the regulatory regions of the viral genome. Activates or represses transcription depending on E2RE's position with regards to proximal promoter elements including the TATA-box. Repression occurs by sterically hindering the assembly of the transcription initiation complex.</text>
</comment>
<comment type="subunit">
    <text evidence="1">Binds DNA as homodimer. Interacts with protein E1; this interaction greatly increases E1 DNA-binding activity. Interacts with protein L1; this interaction enhances E2-dependent replication and transcription activation. Interacts with protein L2; this interaction inhibits E2 transcriptional activity but not DNA replication function E2. Interacts with protein E7; this interaction inhibits E7 oncogenic activity. Interacts with host TAF1; this interaction modulates E2-dependent transcriptional regulation. Interacts with host BRD4; this interaction mediates E2 transcriptional activation function. Additionally, the interaction with host BRD4 on mitotic chromosomes mediates tethering of the viral genome. Interacts with host TOPBP1; this interaction is required for optimal viral DNA replication.</text>
</comment>
<comment type="subcellular location">
    <subcellularLocation>
        <location evidence="1">Host nucleus</location>
    </subcellularLocation>
</comment>
<comment type="PTM">
    <text evidence="1">Phosphorylated.</text>
</comment>
<comment type="PTM">
    <text evidence="1">Sumoylation plays a regulatory role in E2 transcriptional activity.</text>
</comment>
<comment type="similarity">
    <text evidence="1">Belongs to the papillomaviridae E2 protein family.</text>
</comment>
<evidence type="ECO:0000255" key="1">
    <source>
        <dbReference type="HAMAP-Rule" id="MF_04001"/>
    </source>
</evidence>
<evidence type="ECO:0000256" key="2">
    <source>
        <dbReference type="SAM" id="MobiDB-lite"/>
    </source>
</evidence>
<sequence>METLANRLDVCQDKMLELYEKDSNKLEDQIMHWQLMRVENALLYKARECGLTHIGHQVVPPLSVTKAKARSAIEVHVALLQLQESAYAQDSWTLRDTSREMWDTVPKKCWKKRGVTVEVRYDGDETKSMCYVHWRDIFTQNYSDDKWVKVAGHVSYEGLYYIHEGEQTFYVKFKDDAYVYGETGKWEVHVGGKVIHHHAFDPVSSTREIPAAGPLCTGDTTKASTETSVGATEGPQQKRQRLETLNWEQQQRQYPQTPSTQTTERASQPLDVTRTSDCDTTCPYTVGHPSDPDCAPVVHLKGDPNCLKCFRYRLHKGKRKLYCKTSSTWRWSCESENQAAFVTIWYTSYSQRNEFLSTVKVPPGIQVILGHMSMFV</sequence>
<keyword id="KW-0010">Activator</keyword>
<keyword id="KW-0235">DNA replication</keyword>
<keyword id="KW-0238">DNA-binding</keyword>
<keyword id="KW-0244">Early protein</keyword>
<keyword id="KW-1048">Host nucleus</keyword>
<keyword id="KW-1017">Isopeptide bond</keyword>
<keyword id="KW-0597">Phosphoprotein</keyword>
<keyword id="KW-0678">Repressor</keyword>
<keyword id="KW-0804">Transcription</keyword>
<keyword id="KW-0805">Transcription regulation</keyword>
<keyword id="KW-0832">Ubl conjugation</keyword>
<reference key="1">
    <citation type="submission" date="1995-10" db="EMBL/GenBank/DDBJ databases">
        <authorList>
            <person name="Delius H."/>
        </authorList>
    </citation>
    <scope>NUCLEOTIDE SEQUENCE [GENOMIC DNA]</scope>
</reference>
<gene>
    <name evidence="1" type="primary">E2</name>
</gene>
<accession>P50771</accession>
<feature type="chain" id="PRO_0000133207" description="Regulatory protein E2">
    <location>
        <begin position="1"/>
        <end position="376"/>
    </location>
</feature>
<feature type="region of interest" description="Transactivation domain" evidence="1">
    <location>
        <begin position="1"/>
        <end position="206"/>
    </location>
</feature>
<feature type="region of interest" description="Disordered" evidence="2">
    <location>
        <begin position="211"/>
        <end position="271"/>
    </location>
</feature>
<feature type="region of interest" description="DNA-binding domain" evidence="1">
    <location>
        <begin position="294"/>
        <end position="376"/>
    </location>
</feature>
<feature type="compositionally biased region" description="Polar residues" evidence="2">
    <location>
        <begin position="218"/>
        <end position="237"/>
    </location>
</feature>
<feature type="compositionally biased region" description="Polar residues" evidence="2">
    <location>
        <begin position="246"/>
        <end position="266"/>
    </location>
</feature>
<feature type="cross-link" description="Glycyl lysine isopeptide (Lys-Gly) (interchain with G-Cter in SUMO)" evidence="1">
    <location>
        <position position="301"/>
    </location>
</feature>
<proteinExistence type="inferred from homology"/>
<organismHost>
    <name type="scientific">Homo sapiens</name>
    <name type="common">Human</name>
    <dbReference type="NCBI Taxonomy" id="9606"/>
</organismHost>
<organism>
    <name type="scientific">Human papillomavirus 28</name>
    <dbReference type="NCBI Taxonomy" id="37111"/>
    <lineage>
        <taxon>Viruses</taxon>
        <taxon>Monodnaviria</taxon>
        <taxon>Shotokuvirae</taxon>
        <taxon>Cossaviricota</taxon>
        <taxon>Papovaviricetes</taxon>
        <taxon>Zurhausenvirales</taxon>
        <taxon>Papillomaviridae</taxon>
        <taxon>Firstpapillomavirinae</taxon>
        <taxon>Alphapapillomavirus</taxon>
        <taxon>Alphapapillomavirus 2</taxon>
    </lineage>
</organism>